<sequence length="220" mass="24541">MKKEKAVVVFSGGQDSTTCLFWAIEQFAEVEAVTFNYNQRHKLEIDCAVEIAKELGIKHTVLDMSLLNQLAPNALTRTDMEITHEEGELPSTFVDGRNLLFLSFAAVLAKQVGARHIVTGVCETDFSGYPDCRDVFVKSLNVTLNLSMDYPFVIHTPLMWIDKAETWKLSDELGAFEFVREKTLTCYNGIIGDGCGECPACQLRKAGLDTYLQEREGASN</sequence>
<dbReference type="EC" id="6.3.4.20" evidence="1"/>
<dbReference type="EMBL" id="AE016879">
    <property type="protein sequence ID" value="AAP25303.1"/>
    <property type="molecule type" value="Genomic_DNA"/>
</dbReference>
<dbReference type="EMBL" id="AE017225">
    <property type="protein sequence ID" value="AAT53577.1"/>
    <property type="molecule type" value="Genomic_DNA"/>
</dbReference>
<dbReference type="EMBL" id="AE017334">
    <property type="protein sequence ID" value="AAT30453.1"/>
    <property type="molecule type" value="Genomic_DNA"/>
</dbReference>
<dbReference type="RefSeq" id="NP_843817.1">
    <property type="nucleotide sequence ID" value="NC_003997.3"/>
</dbReference>
<dbReference type="RefSeq" id="WP_000711603.1">
    <property type="nucleotide sequence ID" value="NZ_WXXJ01000001.1"/>
</dbReference>
<dbReference type="RefSeq" id="YP_027526.1">
    <property type="nucleotide sequence ID" value="NC_005945.1"/>
</dbReference>
<dbReference type="SMR" id="Q81TC7"/>
<dbReference type="STRING" id="261594.GBAA_1359"/>
<dbReference type="DNASU" id="1083924"/>
<dbReference type="GeneID" id="45021343"/>
<dbReference type="KEGG" id="ban:BA_1359"/>
<dbReference type="KEGG" id="banh:HYU01_06900"/>
<dbReference type="KEGG" id="bar:GBAA_1359"/>
<dbReference type="KEGG" id="bat:BAS1257"/>
<dbReference type="PATRIC" id="fig|198094.11.peg.1332"/>
<dbReference type="eggNOG" id="COG0603">
    <property type="taxonomic scope" value="Bacteria"/>
</dbReference>
<dbReference type="HOGENOM" id="CLU_081854_0_0_9"/>
<dbReference type="OMA" id="VWVPNRN"/>
<dbReference type="OrthoDB" id="9789567at2"/>
<dbReference type="UniPathway" id="UPA00391"/>
<dbReference type="Proteomes" id="UP000000427">
    <property type="component" value="Chromosome"/>
</dbReference>
<dbReference type="Proteomes" id="UP000000594">
    <property type="component" value="Chromosome"/>
</dbReference>
<dbReference type="GO" id="GO:0005524">
    <property type="term" value="F:ATP binding"/>
    <property type="evidence" value="ECO:0007669"/>
    <property type="project" value="UniProtKB-UniRule"/>
</dbReference>
<dbReference type="GO" id="GO:0016879">
    <property type="term" value="F:ligase activity, forming carbon-nitrogen bonds"/>
    <property type="evidence" value="ECO:0007669"/>
    <property type="project" value="UniProtKB-UniRule"/>
</dbReference>
<dbReference type="GO" id="GO:0008270">
    <property type="term" value="F:zinc ion binding"/>
    <property type="evidence" value="ECO:0007669"/>
    <property type="project" value="UniProtKB-UniRule"/>
</dbReference>
<dbReference type="GO" id="GO:0008616">
    <property type="term" value="P:queuosine biosynthetic process"/>
    <property type="evidence" value="ECO:0007669"/>
    <property type="project" value="UniProtKB-UniRule"/>
</dbReference>
<dbReference type="CDD" id="cd01995">
    <property type="entry name" value="QueC-like"/>
    <property type="match status" value="1"/>
</dbReference>
<dbReference type="FunFam" id="3.40.50.620:FF:000017">
    <property type="entry name" value="7-cyano-7-deazaguanine synthase"/>
    <property type="match status" value="1"/>
</dbReference>
<dbReference type="Gene3D" id="3.40.50.620">
    <property type="entry name" value="HUPs"/>
    <property type="match status" value="1"/>
</dbReference>
<dbReference type="HAMAP" id="MF_01633">
    <property type="entry name" value="QueC"/>
    <property type="match status" value="1"/>
</dbReference>
<dbReference type="InterPro" id="IPR018317">
    <property type="entry name" value="QueC"/>
</dbReference>
<dbReference type="InterPro" id="IPR014729">
    <property type="entry name" value="Rossmann-like_a/b/a_fold"/>
</dbReference>
<dbReference type="NCBIfam" id="TIGR00364">
    <property type="entry name" value="7-cyano-7-deazaguanine synthase QueC"/>
    <property type="match status" value="1"/>
</dbReference>
<dbReference type="PANTHER" id="PTHR42914">
    <property type="entry name" value="7-CYANO-7-DEAZAGUANINE SYNTHASE"/>
    <property type="match status" value="1"/>
</dbReference>
<dbReference type="PANTHER" id="PTHR42914:SF1">
    <property type="entry name" value="7-CYANO-7-DEAZAGUANINE SYNTHASE"/>
    <property type="match status" value="1"/>
</dbReference>
<dbReference type="Pfam" id="PF06508">
    <property type="entry name" value="QueC"/>
    <property type="match status" value="1"/>
</dbReference>
<dbReference type="PIRSF" id="PIRSF006293">
    <property type="entry name" value="ExsB"/>
    <property type="match status" value="1"/>
</dbReference>
<dbReference type="SUPFAM" id="SSF52402">
    <property type="entry name" value="Adenine nucleotide alpha hydrolases-like"/>
    <property type="match status" value="1"/>
</dbReference>
<evidence type="ECO:0000255" key="1">
    <source>
        <dbReference type="HAMAP-Rule" id="MF_01633"/>
    </source>
</evidence>
<proteinExistence type="inferred from homology"/>
<protein>
    <recommendedName>
        <fullName evidence="1">7-cyano-7-deazaguanine synthase</fullName>
        <ecNumber evidence="1">6.3.4.20</ecNumber>
    </recommendedName>
    <alternativeName>
        <fullName evidence="1">7-cyano-7-carbaguanine synthase</fullName>
    </alternativeName>
    <alternativeName>
        <fullName evidence="1">PreQ(0) synthase</fullName>
    </alternativeName>
    <alternativeName>
        <fullName evidence="1">Queuosine biosynthesis protein QueC</fullName>
    </alternativeName>
</protein>
<reference key="1">
    <citation type="journal article" date="2003" name="Nature">
        <title>The genome sequence of Bacillus anthracis Ames and comparison to closely related bacteria.</title>
        <authorList>
            <person name="Read T.D."/>
            <person name="Peterson S.N."/>
            <person name="Tourasse N.J."/>
            <person name="Baillie L.W."/>
            <person name="Paulsen I.T."/>
            <person name="Nelson K.E."/>
            <person name="Tettelin H."/>
            <person name="Fouts D.E."/>
            <person name="Eisen J.A."/>
            <person name="Gill S.R."/>
            <person name="Holtzapple E.K."/>
            <person name="Okstad O.A."/>
            <person name="Helgason E."/>
            <person name="Rilstone J."/>
            <person name="Wu M."/>
            <person name="Kolonay J.F."/>
            <person name="Beanan M.J."/>
            <person name="Dodson R.J."/>
            <person name="Brinkac L.M."/>
            <person name="Gwinn M.L."/>
            <person name="DeBoy R.T."/>
            <person name="Madpu R."/>
            <person name="Daugherty S.C."/>
            <person name="Durkin A.S."/>
            <person name="Haft D.H."/>
            <person name="Nelson W.C."/>
            <person name="Peterson J.D."/>
            <person name="Pop M."/>
            <person name="Khouri H.M."/>
            <person name="Radune D."/>
            <person name="Benton J.L."/>
            <person name="Mahamoud Y."/>
            <person name="Jiang L."/>
            <person name="Hance I.R."/>
            <person name="Weidman J.F."/>
            <person name="Berry K.J."/>
            <person name="Plaut R.D."/>
            <person name="Wolf A.M."/>
            <person name="Watkins K.L."/>
            <person name="Nierman W.C."/>
            <person name="Hazen A."/>
            <person name="Cline R.T."/>
            <person name="Redmond C."/>
            <person name="Thwaite J.E."/>
            <person name="White O."/>
            <person name="Salzberg S.L."/>
            <person name="Thomason B."/>
            <person name="Friedlander A.M."/>
            <person name="Koehler T.M."/>
            <person name="Hanna P.C."/>
            <person name="Kolstoe A.-B."/>
            <person name="Fraser C.M."/>
        </authorList>
    </citation>
    <scope>NUCLEOTIDE SEQUENCE [LARGE SCALE GENOMIC DNA]</scope>
    <source>
        <strain>Ames / isolate Porton</strain>
    </source>
</reference>
<reference key="2">
    <citation type="submission" date="2004-01" db="EMBL/GenBank/DDBJ databases">
        <title>Complete genome sequence of Bacillus anthracis Sterne.</title>
        <authorList>
            <person name="Brettin T.S."/>
            <person name="Bruce D."/>
            <person name="Challacombe J.F."/>
            <person name="Gilna P."/>
            <person name="Han C."/>
            <person name="Hill K."/>
            <person name="Hitchcock P."/>
            <person name="Jackson P."/>
            <person name="Keim P."/>
            <person name="Longmire J."/>
            <person name="Lucas S."/>
            <person name="Okinaka R."/>
            <person name="Richardson P."/>
            <person name="Rubin E."/>
            <person name="Tice H."/>
        </authorList>
    </citation>
    <scope>NUCLEOTIDE SEQUENCE [LARGE SCALE GENOMIC DNA]</scope>
    <source>
        <strain>Sterne</strain>
    </source>
</reference>
<reference key="3">
    <citation type="journal article" date="2009" name="J. Bacteriol.">
        <title>The complete genome sequence of Bacillus anthracis Ames 'Ancestor'.</title>
        <authorList>
            <person name="Ravel J."/>
            <person name="Jiang L."/>
            <person name="Stanley S.T."/>
            <person name="Wilson M.R."/>
            <person name="Decker R.S."/>
            <person name="Read T.D."/>
            <person name="Worsham P."/>
            <person name="Keim P.S."/>
            <person name="Salzberg S.L."/>
            <person name="Fraser-Liggett C.M."/>
            <person name="Rasko D.A."/>
        </authorList>
    </citation>
    <scope>NUCLEOTIDE SEQUENCE [LARGE SCALE GENOMIC DNA]</scope>
    <source>
        <strain>Ames ancestor</strain>
    </source>
</reference>
<accession>Q81TC7</accession>
<accession>Q6I1K4</accession>
<accession>Q6KVF3</accession>
<keyword id="KW-0067">ATP-binding</keyword>
<keyword id="KW-0436">Ligase</keyword>
<keyword id="KW-0479">Metal-binding</keyword>
<keyword id="KW-0547">Nucleotide-binding</keyword>
<keyword id="KW-0671">Queuosine biosynthesis</keyword>
<keyword id="KW-1185">Reference proteome</keyword>
<keyword id="KW-0862">Zinc</keyword>
<organism>
    <name type="scientific">Bacillus anthracis</name>
    <dbReference type="NCBI Taxonomy" id="1392"/>
    <lineage>
        <taxon>Bacteria</taxon>
        <taxon>Bacillati</taxon>
        <taxon>Bacillota</taxon>
        <taxon>Bacilli</taxon>
        <taxon>Bacillales</taxon>
        <taxon>Bacillaceae</taxon>
        <taxon>Bacillus</taxon>
        <taxon>Bacillus cereus group</taxon>
    </lineage>
</organism>
<comment type="function">
    <text evidence="1">Catalyzes the ATP-dependent conversion of 7-carboxy-7-deazaguanine (CDG) to 7-cyano-7-deazaguanine (preQ(0)).</text>
</comment>
<comment type="catalytic activity">
    <reaction evidence="1">
        <text>7-carboxy-7-deazaguanine + NH4(+) + ATP = 7-cyano-7-deazaguanine + ADP + phosphate + H2O + H(+)</text>
        <dbReference type="Rhea" id="RHEA:27982"/>
        <dbReference type="ChEBI" id="CHEBI:15377"/>
        <dbReference type="ChEBI" id="CHEBI:15378"/>
        <dbReference type="ChEBI" id="CHEBI:28938"/>
        <dbReference type="ChEBI" id="CHEBI:30616"/>
        <dbReference type="ChEBI" id="CHEBI:43474"/>
        <dbReference type="ChEBI" id="CHEBI:45075"/>
        <dbReference type="ChEBI" id="CHEBI:61036"/>
        <dbReference type="ChEBI" id="CHEBI:456216"/>
        <dbReference type="EC" id="6.3.4.20"/>
    </reaction>
</comment>
<comment type="cofactor">
    <cofactor evidence="1">
        <name>Zn(2+)</name>
        <dbReference type="ChEBI" id="CHEBI:29105"/>
    </cofactor>
    <text evidence="1">Binds 1 zinc ion per subunit.</text>
</comment>
<comment type="pathway">
    <text evidence="1">Purine metabolism; 7-cyano-7-deazaguanine biosynthesis.</text>
</comment>
<comment type="subunit">
    <text evidence="1">Homodimer.</text>
</comment>
<comment type="similarity">
    <text evidence="1">Belongs to the QueC family.</text>
</comment>
<name>QUEC_BACAN</name>
<gene>
    <name evidence="1" type="primary">queC</name>
    <name type="ordered locus">BA_1359</name>
    <name type="ordered locus">GBAA_1359</name>
    <name type="ordered locus">BAS1257</name>
</gene>
<feature type="chain" id="PRO_0000246794" description="7-cyano-7-deazaguanine synthase">
    <location>
        <begin position="1"/>
        <end position="220"/>
    </location>
</feature>
<feature type="binding site" evidence="1">
    <location>
        <begin position="10"/>
        <end position="20"/>
    </location>
    <ligand>
        <name>ATP</name>
        <dbReference type="ChEBI" id="CHEBI:30616"/>
    </ligand>
</feature>
<feature type="binding site" evidence="1">
    <location>
        <position position="186"/>
    </location>
    <ligand>
        <name>Zn(2+)</name>
        <dbReference type="ChEBI" id="CHEBI:29105"/>
    </ligand>
</feature>
<feature type="binding site" evidence="1">
    <location>
        <position position="195"/>
    </location>
    <ligand>
        <name>Zn(2+)</name>
        <dbReference type="ChEBI" id="CHEBI:29105"/>
    </ligand>
</feature>
<feature type="binding site" evidence="1">
    <location>
        <position position="198"/>
    </location>
    <ligand>
        <name>Zn(2+)</name>
        <dbReference type="ChEBI" id="CHEBI:29105"/>
    </ligand>
</feature>
<feature type="binding site" evidence="1">
    <location>
        <position position="201"/>
    </location>
    <ligand>
        <name>Zn(2+)</name>
        <dbReference type="ChEBI" id="CHEBI:29105"/>
    </ligand>
</feature>